<evidence type="ECO:0000255" key="1">
    <source>
        <dbReference type="HAMAP-Rule" id="MF_00687"/>
    </source>
</evidence>
<organism>
    <name type="scientific">Cereibacter sphaeroides (strain ATCC 17023 / DSM 158 / JCM 6121 / CCUG 31486 / LMG 2827 / NBRC 12203 / NCIMB 8253 / ATH 2.4.1.)</name>
    <name type="common">Rhodobacter sphaeroides</name>
    <dbReference type="NCBI Taxonomy" id="272943"/>
    <lineage>
        <taxon>Bacteria</taxon>
        <taxon>Pseudomonadati</taxon>
        <taxon>Pseudomonadota</taxon>
        <taxon>Alphaproteobacteria</taxon>
        <taxon>Rhodobacterales</taxon>
        <taxon>Paracoccaceae</taxon>
        <taxon>Cereibacter</taxon>
    </lineage>
</organism>
<proteinExistence type="inferred from homology"/>
<protein>
    <recommendedName>
        <fullName evidence="1">4-deoxy-L-threo-5-hexosulose-uronate ketol-isomerase</fullName>
        <ecNumber evidence="1">5.3.1.17</ecNumber>
    </recommendedName>
    <alternativeName>
        <fullName evidence="1">5-keto-4-deoxyuronate isomerase</fullName>
    </alternativeName>
    <alternativeName>
        <fullName evidence="1">DKI isomerase</fullName>
    </alternativeName>
</protein>
<feature type="chain" id="PRO_1000045086" description="4-deoxy-L-threo-5-hexosulose-uronate ketol-isomerase">
    <location>
        <begin position="1"/>
        <end position="274"/>
    </location>
</feature>
<feature type="binding site" evidence="1">
    <location>
        <position position="192"/>
    </location>
    <ligand>
        <name>Zn(2+)</name>
        <dbReference type="ChEBI" id="CHEBI:29105"/>
    </ligand>
</feature>
<feature type="binding site" evidence="1">
    <location>
        <position position="194"/>
    </location>
    <ligand>
        <name>Zn(2+)</name>
        <dbReference type="ChEBI" id="CHEBI:29105"/>
    </ligand>
</feature>
<feature type="binding site" evidence="1">
    <location>
        <position position="199"/>
    </location>
    <ligand>
        <name>Zn(2+)</name>
        <dbReference type="ChEBI" id="CHEBI:29105"/>
    </ligand>
</feature>
<feature type="binding site" evidence="1">
    <location>
        <position position="241"/>
    </location>
    <ligand>
        <name>Zn(2+)</name>
        <dbReference type="ChEBI" id="CHEBI:29105"/>
    </ligand>
</feature>
<keyword id="KW-0413">Isomerase</keyword>
<keyword id="KW-0479">Metal-binding</keyword>
<keyword id="KW-1185">Reference proteome</keyword>
<keyword id="KW-0862">Zinc</keyword>
<reference key="1">
    <citation type="submission" date="2005-09" db="EMBL/GenBank/DDBJ databases">
        <title>Complete sequence of chromosome 1 of Rhodobacter sphaeroides 2.4.1.</title>
        <authorList>
            <person name="Copeland A."/>
            <person name="Lucas S."/>
            <person name="Lapidus A."/>
            <person name="Barry K."/>
            <person name="Detter J.C."/>
            <person name="Glavina T."/>
            <person name="Hammon N."/>
            <person name="Israni S."/>
            <person name="Pitluck S."/>
            <person name="Richardson P."/>
            <person name="Mackenzie C."/>
            <person name="Choudhary M."/>
            <person name="Larimer F."/>
            <person name="Hauser L.J."/>
            <person name="Land M."/>
            <person name="Donohue T.J."/>
            <person name="Kaplan S."/>
        </authorList>
    </citation>
    <scope>NUCLEOTIDE SEQUENCE [LARGE SCALE GENOMIC DNA]</scope>
    <source>
        <strain>ATCC 17023 / DSM 158 / JCM 6121 / CCUG 31486 / LMG 2827 / NBRC 12203 / NCIMB 8253 / ATH 2.4.1.</strain>
    </source>
</reference>
<name>KDUI_CERS4</name>
<gene>
    <name evidence="1" type="primary">kduI</name>
    <name type="ordered locus">RHOS4_20860</name>
    <name type="ORF">RSP_0482</name>
</gene>
<dbReference type="EC" id="5.3.1.17" evidence="1"/>
<dbReference type="EMBL" id="CP000143">
    <property type="protein sequence ID" value="ABA79654.1"/>
    <property type="molecule type" value="Genomic_DNA"/>
</dbReference>
<dbReference type="RefSeq" id="WP_002720646.1">
    <property type="nucleotide sequence ID" value="NZ_CP030271.1"/>
</dbReference>
<dbReference type="RefSeq" id="YP_353555.1">
    <property type="nucleotide sequence ID" value="NC_007493.2"/>
</dbReference>
<dbReference type="SMR" id="Q3J0N0"/>
<dbReference type="STRING" id="272943.RSP_0482"/>
<dbReference type="EnsemblBacteria" id="ABA79654">
    <property type="protein sequence ID" value="ABA79654"/>
    <property type="gene ID" value="RSP_0482"/>
</dbReference>
<dbReference type="GeneID" id="67447214"/>
<dbReference type="KEGG" id="rsp:RSP_0482"/>
<dbReference type="PATRIC" id="fig|272943.9.peg.2431"/>
<dbReference type="eggNOG" id="COG3717">
    <property type="taxonomic scope" value="Bacteria"/>
</dbReference>
<dbReference type="OrthoDB" id="9770644at2"/>
<dbReference type="PhylomeDB" id="Q3J0N0"/>
<dbReference type="UniPathway" id="UPA00545">
    <property type="reaction ID" value="UER00826"/>
</dbReference>
<dbReference type="Proteomes" id="UP000002703">
    <property type="component" value="Chromosome 1"/>
</dbReference>
<dbReference type="GO" id="GO:0008697">
    <property type="term" value="F:4-deoxy-L-threo-5-hexosulose-uronate ketol-isomerase activity"/>
    <property type="evidence" value="ECO:0007669"/>
    <property type="project" value="UniProtKB-UniRule"/>
</dbReference>
<dbReference type="GO" id="GO:0008270">
    <property type="term" value="F:zinc ion binding"/>
    <property type="evidence" value="ECO:0007669"/>
    <property type="project" value="UniProtKB-UniRule"/>
</dbReference>
<dbReference type="GO" id="GO:0019698">
    <property type="term" value="P:D-galacturonate catabolic process"/>
    <property type="evidence" value="ECO:0007669"/>
    <property type="project" value="TreeGrafter"/>
</dbReference>
<dbReference type="GO" id="GO:0042840">
    <property type="term" value="P:D-glucuronate catabolic process"/>
    <property type="evidence" value="ECO:0007669"/>
    <property type="project" value="TreeGrafter"/>
</dbReference>
<dbReference type="GO" id="GO:0045490">
    <property type="term" value="P:pectin catabolic process"/>
    <property type="evidence" value="ECO:0007669"/>
    <property type="project" value="UniProtKB-UniRule"/>
</dbReference>
<dbReference type="CDD" id="cd20491">
    <property type="entry name" value="cupin_KduI_C"/>
    <property type="match status" value="1"/>
</dbReference>
<dbReference type="CDD" id="cd20294">
    <property type="entry name" value="cupin_KduI_N"/>
    <property type="match status" value="1"/>
</dbReference>
<dbReference type="Gene3D" id="2.60.120.10">
    <property type="entry name" value="Jelly Rolls"/>
    <property type="match status" value="1"/>
</dbReference>
<dbReference type="Gene3D" id="2.60.120.520">
    <property type="entry name" value="pectin degrading enzyme 5-keto 4- deoxyuronate isomerase, domain 1"/>
    <property type="match status" value="1"/>
</dbReference>
<dbReference type="HAMAP" id="MF_00687">
    <property type="entry name" value="KduI"/>
    <property type="match status" value="1"/>
</dbReference>
<dbReference type="InterPro" id="IPR007045">
    <property type="entry name" value="KduI"/>
</dbReference>
<dbReference type="InterPro" id="IPR021120">
    <property type="entry name" value="KduI/IolB_isomerase"/>
</dbReference>
<dbReference type="InterPro" id="IPR027449">
    <property type="entry name" value="KduI_N"/>
</dbReference>
<dbReference type="InterPro" id="IPR014710">
    <property type="entry name" value="RmlC-like_jellyroll"/>
</dbReference>
<dbReference type="InterPro" id="IPR011051">
    <property type="entry name" value="RmlC_Cupin_sf"/>
</dbReference>
<dbReference type="NCBIfam" id="NF002091">
    <property type="entry name" value="PRK00924.1"/>
    <property type="match status" value="1"/>
</dbReference>
<dbReference type="PANTHER" id="PTHR38461">
    <property type="entry name" value="4-DEOXY-L-THREO-5-HEXOSULOSE-URONATE KETOL-ISOMERASE"/>
    <property type="match status" value="1"/>
</dbReference>
<dbReference type="PANTHER" id="PTHR38461:SF1">
    <property type="entry name" value="4-DEOXY-L-THREO-5-HEXOSULOSE-URONATE KETOL-ISOMERASE"/>
    <property type="match status" value="1"/>
</dbReference>
<dbReference type="Pfam" id="PF04962">
    <property type="entry name" value="KduI"/>
    <property type="match status" value="1"/>
</dbReference>
<dbReference type="PIRSF" id="PIRSF006625">
    <property type="entry name" value="KduI"/>
    <property type="match status" value="1"/>
</dbReference>
<dbReference type="SUPFAM" id="SSF51182">
    <property type="entry name" value="RmlC-like cupins"/>
    <property type="match status" value="1"/>
</dbReference>
<comment type="function">
    <text evidence="1">Catalyzes the isomerization of 5-dehydro-4-deoxy-D-glucuronate to 3-deoxy-D-glycero-2,5-hexodiulosonate.</text>
</comment>
<comment type="catalytic activity">
    <reaction evidence="1">
        <text>5-dehydro-4-deoxy-D-glucuronate = 3-deoxy-D-glycero-2,5-hexodiulosonate</text>
        <dbReference type="Rhea" id="RHEA:23896"/>
        <dbReference type="ChEBI" id="CHEBI:17117"/>
        <dbReference type="ChEBI" id="CHEBI:29071"/>
        <dbReference type="EC" id="5.3.1.17"/>
    </reaction>
</comment>
<comment type="cofactor">
    <cofactor evidence="1">
        <name>Zn(2+)</name>
        <dbReference type="ChEBI" id="CHEBI:29105"/>
    </cofactor>
    <text evidence="1">Binds 1 zinc ion per subunit.</text>
</comment>
<comment type="pathway">
    <text evidence="1">Glycan metabolism; pectin degradation; 2-dehydro-3-deoxy-D-gluconate from pectin: step 4/5.</text>
</comment>
<comment type="similarity">
    <text evidence="1">Belongs to the KduI family.</text>
</comment>
<sequence>MTHVEIRHAMDPVSARQLDTAGLREAFHMGDLFRSGEIRLVYTHYDRMIVGGAVPAGEPLVLDEVKPTGTASILDRREMGVVNVGAAGTVSAGGESWEMGRGDVLYLPMGAGPVTFAGEGRFYILSAPAHTAHPARLVKLEDAKKVKLGSPETANERTINQFIHPEVMQSCQLVVGYTQFHGGSVWNTMPAHVHDRRMEAYLYFDLAEEARVFHFMGEPSETRHLVMRNEEAVVSPPWSIHCGCGTGSYTFVWAMAGDNVDYRDVEMVAMEDLR</sequence>
<accession>Q3J0N0</accession>